<name>LEXA_GEOKA</name>
<protein>
    <recommendedName>
        <fullName evidence="1">LexA repressor</fullName>
        <ecNumber evidence="1">3.4.21.88</ecNumber>
    </recommendedName>
</protein>
<accession>Q5L0C3</accession>
<feature type="chain" id="PRO_0000170039" description="LexA repressor">
    <location>
        <begin position="1"/>
        <end position="207"/>
    </location>
</feature>
<feature type="DNA-binding region" description="H-T-H motif" evidence="1">
    <location>
        <begin position="28"/>
        <end position="48"/>
    </location>
</feature>
<feature type="active site" description="For autocatalytic cleavage activity" evidence="1">
    <location>
        <position position="129"/>
    </location>
</feature>
<feature type="active site" description="For autocatalytic cleavage activity" evidence="1">
    <location>
        <position position="167"/>
    </location>
</feature>
<feature type="site" description="Cleavage; by autolysis" evidence="1">
    <location>
        <begin position="93"/>
        <end position="94"/>
    </location>
</feature>
<evidence type="ECO:0000255" key="1">
    <source>
        <dbReference type="HAMAP-Rule" id="MF_00015"/>
    </source>
</evidence>
<comment type="function">
    <text evidence="1">Represses a number of genes involved in the response to DNA damage (SOS response), including recA and lexA. In the presence of single-stranded DNA, RecA interacts with LexA causing an autocatalytic cleavage which disrupts the DNA-binding part of LexA, leading to derepression of the SOS regulon and eventually DNA repair.</text>
</comment>
<comment type="catalytic activity">
    <reaction evidence="1">
        <text>Hydrolysis of Ala-|-Gly bond in repressor LexA.</text>
        <dbReference type="EC" id="3.4.21.88"/>
    </reaction>
</comment>
<comment type="subunit">
    <text evidence="1">Homodimer.</text>
</comment>
<comment type="similarity">
    <text evidence="1">Belongs to the peptidase S24 family.</text>
</comment>
<dbReference type="EC" id="3.4.21.88" evidence="1"/>
<dbReference type="EMBL" id="BA000043">
    <property type="protein sequence ID" value="BAD75613.1"/>
    <property type="molecule type" value="Genomic_DNA"/>
</dbReference>
<dbReference type="RefSeq" id="WP_011230827.1">
    <property type="nucleotide sequence ID" value="NC_006510.1"/>
</dbReference>
<dbReference type="SMR" id="Q5L0C3"/>
<dbReference type="STRING" id="235909.GK1328"/>
<dbReference type="MEROPS" id="S24.001"/>
<dbReference type="GeneID" id="89611471"/>
<dbReference type="KEGG" id="gka:GK1328"/>
<dbReference type="eggNOG" id="COG1974">
    <property type="taxonomic scope" value="Bacteria"/>
</dbReference>
<dbReference type="HOGENOM" id="CLU_066192_45_1_9"/>
<dbReference type="Proteomes" id="UP000001172">
    <property type="component" value="Chromosome"/>
</dbReference>
<dbReference type="GO" id="GO:0003677">
    <property type="term" value="F:DNA binding"/>
    <property type="evidence" value="ECO:0007669"/>
    <property type="project" value="UniProtKB-UniRule"/>
</dbReference>
<dbReference type="GO" id="GO:0004252">
    <property type="term" value="F:serine-type endopeptidase activity"/>
    <property type="evidence" value="ECO:0007669"/>
    <property type="project" value="UniProtKB-UniRule"/>
</dbReference>
<dbReference type="GO" id="GO:0006281">
    <property type="term" value="P:DNA repair"/>
    <property type="evidence" value="ECO:0007669"/>
    <property type="project" value="UniProtKB-UniRule"/>
</dbReference>
<dbReference type="GO" id="GO:0006260">
    <property type="term" value="P:DNA replication"/>
    <property type="evidence" value="ECO:0007669"/>
    <property type="project" value="UniProtKB-UniRule"/>
</dbReference>
<dbReference type="GO" id="GO:0045892">
    <property type="term" value="P:negative regulation of DNA-templated transcription"/>
    <property type="evidence" value="ECO:0007669"/>
    <property type="project" value="UniProtKB-UniRule"/>
</dbReference>
<dbReference type="GO" id="GO:0006508">
    <property type="term" value="P:proteolysis"/>
    <property type="evidence" value="ECO:0007669"/>
    <property type="project" value="InterPro"/>
</dbReference>
<dbReference type="GO" id="GO:0009432">
    <property type="term" value="P:SOS response"/>
    <property type="evidence" value="ECO:0007669"/>
    <property type="project" value="UniProtKB-UniRule"/>
</dbReference>
<dbReference type="CDD" id="cd00090">
    <property type="entry name" value="HTH_ARSR"/>
    <property type="match status" value="1"/>
</dbReference>
<dbReference type="CDD" id="cd06529">
    <property type="entry name" value="S24_LexA-like"/>
    <property type="match status" value="1"/>
</dbReference>
<dbReference type="FunFam" id="1.10.10.10:FF:000009">
    <property type="entry name" value="LexA repressor"/>
    <property type="match status" value="1"/>
</dbReference>
<dbReference type="FunFam" id="2.10.109.10:FF:000001">
    <property type="entry name" value="LexA repressor"/>
    <property type="match status" value="1"/>
</dbReference>
<dbReference type="Gene3D" id="2.10.109.10">
    <property type="entry name" value="Umud Fragment, subunit A"/>
    <property type="match status" value="1"/>
</dbReference>
<dbReference type="Gene3D" id="1.10.10.10">
    <property type="entry name" value="Winged helix-like DNA-binding domain superfamily/Winged helix DNA-binding domain"/>
    <property type="match status" value="1"/>
</dbReference>
<dbReference type="HAMAP" id="MF_00015">
    <property type="entry name" value="LexA"/>
    <property type="match status" value="1"/>
</dbReference>
<dbReference type="InterPro" id="IPR011991">
    <property type="entry name" value="ArsR-like_HTH"/>
</dbReference>
<dbReference type="InterPro" id="IPR006200">
    <property type="entry name" value="LexA"/>
</dbReference>
<dbReference type="InterPro" id="IPR039418">
    <property type="entry name" value="LexA-like"/>
</dbReference>
<dbReference type="InterPro" id="IPR036286">
    <property type="entry name" value="LexA/Signal_pep-like_sf"/>
</dbReference>
<dbReference type="InterPro" id="IPR006199">
    <property type="entry name" value="LexA_DNA-bd_dom"/>
</dbReference>
<dbReference type="InterPro" id="IPR050077">
    <property type="entry name" value="LexA_repressor"/>
</dbReference>
<dbReference type="InterPro" id="IPR006197">
    <property type="entry name" value="Peptidase_S24_LexA"/>
</dbReference>
<dbReference type="InterPro" id="IPR015927">
    <property type="entry name" value="Peptidase_S24_S26A/B/C"/>
</dbReference>
<dbReference type="InterPro" id="IPR036388">
    <property type="entry name" value="WH-like_DNA-bd_sf"/>
</dbReference>
<dbReference type="InterPro" id="IPR036390">
    <property type="entry name" value="WH_DNA-bd_sf"/>
</dbReference>
<dbReference type="NCBIfam" id="TIGR00498">
    <property type="entry name" value="lexA"/>
    <property type="match status" value="1"/>
</dbReference>
<dbReference type="PANTHER" id="PTHR33516">
    <property type="entry name" value="LEXA REPRESSOR"/>
    <property type="match status" value="1"/>
</dbReference>
<dbReference type="PANTHER" id="PTHR33516:SF2">
    <property type="entry name" value="LEXA REPRESSOR-RELATED"/>
    <property type="match status" value="1"/>
</dbReference>
<dbReference type="Pfam" id="PF01726">
    <property type="entry name" value="LexA_DNA_bind"/>
    <property type="match status" value="1"/>
</dbReference>
<dbReference type="Pfam" id="PF00717">
    <property type="entry name" value="Peptidase_S24"/>
    <property type="match status" value="1"/>
</dbReference>
<dbReference type="PRINTS" id="PR00726">
    <property type="entry name" value="LEXASERPTASE"/>
</dbReference>
<dbReference type="SUPFAM" id="SSF51306">
    <property type="entry name" value="LexA/Signal peptidase"/>
    <property type="match status" value="1"/>
</dbReference>
<dbReference type="SUPFAM" id="SSF46785">
    <property type="entry name" value="Winged helix' DNA-binding domain"/>
    <property type="match status" value="1"/>
</dbReference>
<reference key="1">
    <citation type="journal article" date="2004" name="Nucleic Acids Res.">
        <title>Thermoadaptation trait revealed by the genome sequence of thermophilic Geobacillus kaustophilus.</title>
        <authorList>
            <person name="Takami H."/>
            <person name="Takaki Y."/>
            <person name="Chee G.-J."/>
            <person name="Nishi S."/>
            <person name="Shimamura S."/>
            <person name="Suzuki H."/>
            <person name="Matsui S."/>
            <person name="Uchiyama I."/>
        </authorList>
    </citation>
    <scope>NUCLEOTIDE SEQUENCE [LARGE SCALE GENOMIC DNA]</scope>
    <source>
        <strain>HTA426</strain>
    </source>
</reference>
<keyword id="KW-0068">Autocatalytic cleavage</keyword>
<keyword id="KW-0227">DNA damage</keyword>
<keyword id="KW-0234">DNA repair</keyword>
<keyword id="KW-0235">DNA replication</keyword>
<keyword id="KW-0238">DNA-binding</keyword>
<keyword id="KW-0378">Hydrolase</keyword>
<keyword id="KW-1185">Reference proteome</keyword>
<keyword id="KW-0678">Repressor</keyword>
<keyword id="KW-0742">SOS response</keyword>
<keyword id="KW-0804">Transcription</keyword>
<keyword id="KW-0805">Transcription regulation</keyword>
<sequence length="207" mass="23187">MTKLSKRQQQILEFIKQEVKTKGYPPSVREIGEAVGLASSSTVHGHLARLESKGYIRRDPTKPRAIEILDNDMAKEREKEEIISVPIIGKVTAGQPITAVENIEGYFPLPKRLAAGEEQLFMLEVMGDSMIEAGILDGDYVIVRQQSSANNGDIVVAMTEDNEATVKRFFKEKDHIRLQPENAHLEPIIVRDCTILGKVIGVYRLFD</sequence>
<gene>
    <name evidence="1" type="primary">lexA</name>
    <name type="ordered locus">GK1328</name>
</gene>
<proteinExistence type="inferred from homology"/>
<organism>
    <name type="scientific">Geobacillus kaustophilus (strain HTA426)</name>
    <dbReference type="NCBI Taxonomy" id="235909"/>
    <lineage>
        <taxon>Bacteria</taxon>
        <taxon>Bacillati</taxon>
        <taxon>Bacillota</taxon>
        <taxon>Bacilli</taxon>
        <taxon>Bacillales</taxon>
        <taxon>Anoxybacillaceae</taxon>
        <taxon>Geobacillus</taxon>
        <taxon>Geobacillus thermoleovorans group</taxon>
    </lineage>
</organism>